<proteinExistence type="evidence at transcript level"/>
<protein>
    <recommendedName>
        <fullName evidence="5 6">Secreted transmembrane peptide 4</fullName>
    </recommendedName>
    <alternativeName>
        <fullName evidence="7">Phytocytokine STMP4</fullName>
    </alternativeName>
    <alternativeName>
        <fullName evidence="7">Precursor of secreted transmembrane peptide 4</fullName>
    </alternativeName>
</protein>
<reference key="1">
    <citation type="journal article" date="2000" name="Nature">
        <title>Sequence and analysis of chromosome 1 of the plant Arabidopsis thaliana.</title>
        <authorList>
            <person name="Theologis A."/>
            <person name="Ecker J.R."/>
            <person name="Palm C.J."/>
            <person name="Federspiel N.A."/>
            <person name="Kaul S."/>
            <person name="White O."/>
            <person name="Alonso J."/>
            <person name="Altafi H."/>
            <person name="Araujo R."/>
            <person name="Bowman C.L."/>
            <person name="Brooks S.Y."/>
            <person name="Buehler E."/>
            <person name="Chan A."/>
            <person name="Chao Q."/>
            <person name="Chen H."/>
            <person name="Cheuk R.F."/>
            <person name="Chin C.W."/>
            <person name="Chung M.K."/>
            <person name="Conn L."/>
            <person name="Conway A.B."/>
            <person name="Conway A.R."/>
            <person name="Creasy T.H."/>
            <person name="Dewar K."/>
            <person name="Dunn P."/>
            <person name="Etgu P."/>
            <person name="Feldblyum T.V."/>
            <person name="Feng J.-D."/>
            <person name="Fong B."/>
            <person name="Fujii C.Y."/>
            <person name="Gill J.E."/>
            <person name="Goldsmith A.D."/>
            <person name="Haas B."/>
            <person name="Hansen N.F."/>
            <person name="Hughes B."/>
            <person name="Huizar L."/>
            <person name="Hunter J.L."/>
            <person name="Jenkins J."/>
            <person name="Johnson-Hopson C."/>
            <person name="Khan S."/>
            <person name="Khaykin E."/>
            <person name="Kim C.J."/>
            <person name="Koo H.L."/>
            <person name="Kremenetskaia I."/>
            <person name="Kurtz D.B."/>
            <person name="Kwan A."/>
            <person name="Lam B."/>
            <person name="Langin-Hooper S."/>
            <person name="Lee A."/>
            <person name="Lee J.M."/>
            <person name="Lenz C.A."/>
            <person name="Li J.H."/>
            <person name="Li Y.-P."/>
            <person name="Lin X."/>
            <person name="Liu S.X."/>
            <person name="Liu Z.A."/>
            <person name="Luros J.S."/>
            <person name="Maiti R."/>
            <person name="Marziali A."/>
            <person name="Militscher J."/>
            <person name="Miranda M."/>
            <person name="Nguyen M."/>
            <person name="Nierman W.C."/>
            <person name="Osborne B.I."/>
            <person name="Pai G."/>
            <person name="Peterson J."/>
            <person name="Pham P.K."/>
            <person name="Rizzo M."/>
            <person name="Rooney T."/>
            <person name="Rowley D."/>
            <person name="Sakano H."/>
            <person name="Salzberg S.L."/>
            <person name="Schwartz J.R."/>
            <person name="Shinn P."/>
            <person name="Southwick A.M."/>
            <person name="Sun H."/>
            <person name="Tallon L.J."/>
            <person name="Tambunga G."/>
            <person name="Toriumi M.J."/>
            <person name="Town C.D."/>
            <person name="Utterback T."/>
            <person name="Van Aken S."/>
            <person name="Vaysberg M."/>
            <person name="Vysotskaia V.S."/>
            <person name="Walker M."/>
            <person name="Wu D."/>
            <person name="Yu G."/>
            <person name="Fraser C.M."/>
            <person name="Venter J.C."/>
            <person name="Davis R.W."/>
        </authorList>
    </citation>
    <scope>NUCLEOTIDE SEQUENCE [LARGE SCALE GENOMIC DNA]</scope>
    <source>
        <strain>cv. Columbia</strain>
    </source>
</reference>
<reference key="2">
    <citation type="journal article" date="2017" name="Plant J.">
        <title>Araport11: a complete reannotation of the Arabidopsis thaliana reference genome.</title>
        <authorList>
            <person name="Cheng C.Y."/>
            <person name="Krishnakumar V."/>
            <person name="Chan A.P."/>
            <person name="Thibaud-Nissen F."/>
            <person name="Schobel S."/>
            <person name="Town C.D."/>
        </authorList>
    </citation>
    <scope>GENOME REANNOTATION</scope>
    <source>
        <strain>cv. Columbia</strain>
    </source>
</reference>
<reference key="3">
    <citation type="journal article" date="2020" name="J. Integr. Plant Biol.">
        <title>The Brassicaceae-specific secreted peptides, STMPs, function in plant growth and pathogen defense.</title>
        <authorList>
            <person name="Yu Z."/>
            <person name="Xu Y."/>
            <person name="Zhu L."/>
            <person name="Zhang L."/>
            <person name="Liu L."/>
            <person name="Zhang D."/>
            <person name="Li D."/>
            <person name="Wu C."/>
            <person name="Huang J."/>
            <person name="Yang G."/>
            <person name="Yan K."/>
            <person name="Zhang S."/>
            <person name="Zheng C."/>
        </authorList>
    </citation>
    <scope>FUNCTION</scope>
    <scope>DISRUPTION PHENOTYPE</scope>
    <scope>SUBCELLULAR LOCATION</scope>
    <scope>TISSUE SPECIFICITY</scope>
    <scope>INDUCTION BY BIOTIC AND ABIOTIC STRESSES</scope>
    <scope>GENE FAMILY</scope>
    <scope>NOMENCLATURE</scope>
    <source>
        <strain>cv. Columbia</strain>
    </source>
</reference>
<reference key="4">
    <citation type="journal article" date="2021" name="Nat. Commun.">
        <title>The Arabidopsis MIK2 receptor elicits immunity by sensing a conserved signature from phytocytokines and microbes.</title>
        <authorList>
            <person name="Hou S."/>
            <person name="Liu D."/>
            <person name="Huang S."/>
            <person name="Luo D."/>
            <person name="Liu Z."/>
            <person name="Xiang Q."/>
            <person name="Wang P."/>
            <person name="Mu R."/>
            <person name="Han Z."/>
            <person name="Chen S."/>
            <person name="Chai J."/>
            <person name="Shan L."/>
            <person name="He P."/>
        </authorList>
    </citation>
    <scope>GENE FAMILY</scope>
    <source>
        <strain>cv. Columbia</strain>
    </source>
</reference>
<dbReference type="EMBL" id="AC001229">
    <property type="status" value="NOT_ANNOTATED_CDS"/>
    <property type="molecule type" value="Genomic_DNA"/>
</dbReference>
<dbReference type="EMBL" id="CP002684">
    <property type="protein sequence ID" value="ANM58826.1"/>
    <property type="molecule type" value="Genomic_DNA"/>
</dbReference>
<dbReference type="RefSeq" id="NP_001321237.1">
    <property type="nucleotide sequence ID" value="NM_001334209.1"/>
</dbReference>
<dbReference type="EnsemblPlants" id="AT1G65486.3">
    <property type="protein sequence ID" value="AT1G65486.3"/>
    <property type="gene ID" value="AT1G65486"/>
</dbReference>
<dbReference type="GeneID" id="6240283"/>
<dbReference type="Gramene" id="AT1G65486.3">
    <property type="protein sequence ID" value="AT1G65486.3"/>
    <property type="gene ID" value="AT1G65486"/>
</dbReference>
<dbReference type="KEGG" id="ath:AT1G65486"/>
<dbReference type="Araport" id="AT1G65486"/>
<dbReference type="TAIR" id="AT1G65486">
    <property type="gene designation" value="STMP4"/>
</dbReference>
<dbReference type="InParanoid" id="A0A1P8AQ95"/>
<dbReference type="PRO" id="PR:A0A1P8AQ95"/>
<dbReference type="Proteomes" id="UP000006548">
    <property type="component" value="Chromosome 1"/>
</dbReference>
<dbReference type="ExpressionAtlas" id="A0A1P8AQ95">
    <property type="expression patterns" value="baseline and differential"/>
</dbReference>
<dbReference type="GO" id="GO:0048046">
    <property type="term" value="C:apoplast"/>
    <property type="evidence" value="ECO:0000314"/>
    <property type="project" value="UniProtKB"/>
</dbReference>
<dbReference type="GO" id="GO:0005886">
    <property type="term" value="C:plasma membrane"/>
    <property type="evidence" value="ECO:0007669"/>
    <property type="project" value="UniProtKB-SubCell"/>
</dbReference>
<dbReference type="GO" id="GO:0030275">
    <property type="term" value="F:LRR domain binding"/>
    <property type="evidence" value="ECO:0000250"/>
    <property type="project" value="UniProtKB"/>
</dbReference>
<dbReference type="GO" id="GO:0033612">
    <property type="term" value="F:receptor serine/threonine kinase binding"/>
    <property type="evidence" value="ECO:0000250"/>
    <property type="project" value="UniProtKB"/>
</dbReference>
<dbReference type="GO" id="GO:0009723">
    <property type="term" value="P:response to ethylene"/>
    <property type="evidence" value="ECO:0000270"/>
    <property type="project" value="UniProtKB"/>
</dbReference>
<dbReference type="GO" id="GO:0009753">
    <property type="term" value="P:response to jasmonic acid"/>
    <property type="evidence" value="ECO:0000270"/>
    <property type="project" value="UniProtKB"/>
</dbReference>
<dbReference type="GO" id="GO:0009751">
    <property type="term" value="P:response to salicylic acid"/>
    <property type="evidence" value="ECO:0000270"/>
    <property type="project" value="UniProtKB"/>
</dbReference>
<dbReference type="GO" id="GO:0009651">
    <property type="term" value="P:response to salt stress"/>
    <property type="evidence" value="ECO:0000270"/>
    <property type="project" value="UniProtKB"/>
</dbReference>
<dbReference type="GO" id="GO:0009414">
    <property type="term" value="P:response to water deprivation"/>
    <property type="evidence" value="ECO:0000270"/>
    <property type="project" value="UniProtKB"/>
</dbReference>
<comment type="function">
    <text evidence="1 4">Brassicaceae-specific phytocytokine (plant endogenous peptide released into the apoplast) perceived by MIK2 in a BAK1/SERK3 and SERK4 coreceptors-dependent manner, that modulates various physiological and antimicrobial processes including growth prevention and reactive oxygen species (ROS) response regulation (By similarity). Prevents general growth and development (PubMed:31001913).</text>
</comment>
<comment type="subunit">
    <text evidence="1">Interacts with MIK2 (via extracellular leucine-rich repeat domain); this interaction triggers the formation of complex between MIK2 and the BAK1/SERK3 and SERK4 coreceptors, and subsequent BAK1 activation by phosphorylation.</text>
</comment>
<comment type="subcellular location">
    <subcellularLocation>
        <location evidence="4">Cell membrane</location>
    </subcellularLocation>
    <subcellularLocation>
        <location evidence="4">Secreted</location>
        <location evidence="4">Extracellular space</location>
        <location evidence="4">Apoplast</location>
    </subcellularLocation>
    <text evidence="4">The precursor of STMP4 accumulates at the plasma membrane and is proteolytically cleaved to release the STMP4 in the apoplasm.</text>
</comment>
<comment type="tissue specificity">
    <text evidence="4">Mostly expressed in leaves and stems, and, to a lower extent, in roots, siliques, seeds and flowers.</text>
</comment>
<comment type="induction">
    <text evidence="4">Induced by drought, salt stress, jasmonate (MeJA), ethylene (ET) and salicylic acid (SA), mainly in shoots.</text>
</comment>
<comment type="disruption phenotype">
    <text evidence="4">Slightly increased growth and fresh weight.</text>
</comment>
<comment type="similarity">
    <text evidence="7">Belongs to the serine rich endogenous peptide (SCOOP) phytocytokine family.</text>
</comment>
<sequence length="97" mass="10464">MTKNMTKKKMGLMSPNIAAFVLPMLLVLFTISSQVEVVESTGRKLSWAFNGAPIVFTPPSSSCGGSPAAVMASEWMPRRPCRRTRPPGTNIPVSQSP</sequence>
<feature type="signal peptide" evidence="2">
    <location>
        <begin position="1"/>
        <end position="33"/>
    </location>
</feature>
<feature type="propeptide" id="PRO_0000457262" description="Removed in mature form" evidence="1">
    <location>
        <begin position="34"/>
        <end status="unknown"/>
    </location>
</feature>
<feature type="peptide" id="PRO_0000457263" description="Secreted transmembrane peptide 4" evidence="1">
    <location>
        <begin status="unknown"/>
        <end position="97"/>
    </location>
</feature>
<feature type="region of interest" description="Disordered" evidence="3">
    <location>
        <begin position="75"/>
        <end position="97"/>
    </location>
</feature>
<feature type="short sequence motif" description="SCOOP motif" evidence="6">
    <location>
        <begin position="54"/>
        <end position="67"/>
    </location>
</feature>
<feature type="short sequence motif" description="SxS motif essential for MIK2 binding" evidence="1">
    <location>
        <begin position="60"/>
        <end position="62"/>
    </location>
</feature>
<accession>A0A1P8AQ95</accession>
<name>STMP4_ARATH</name>
<gene>
    <name evidence="5 6" type="primary">STMP4</name>
    <name evidence="8" type="ordered locus">At1g65486</name>
    <name evidence="9" type="ORF">F5I14</name>
</gene>
<keyword id="KW-0052">Apoplast</keyword>
<keyword id="KW-1003">Cell membrane</keyword>
<keyword id="KW-0165">Cleavage on pair of basic residues</keyword>
<keyword id="KW-0472">Membrane</keyword>
<keyword id="KW-1185">Reference proteome</keyword>
<keyword id="KW-0964">Secreted</keyword>
<keyword id="KW-0732">Signal</keyword>
<organism>
    <name type="scientific">Arabidopsis thaliana</name>
    <name type="common">Mouse-ear cress</name>
    <dbReference type="NCBI Taxonomy" id="3702"/>
    <lineage>
        <taxon>Eukaryota</taxon>
        <taxon>Viridiplantae</taxon>
        <taxon>Streptophyta</taxon>
        <taxon>Embryophyta</taxon>
        <taxon>Tracheophyta</taxon>
        <taxon>Spermatophyta</taxon>
        <taxon>Magnoliopsida</taxon>
        <taxon>eudicotyledons</taxon>
        <taxon>Gunneridae</taxon>
        <taxon>Pentapetalae</taxon>
        <taxon>rosids</taxon>
        <taxon>malvids</taxon>
        <taxon>Brassicales</taxon>
        <taxon>Brassicaceae</taxon>
        <taxon>Camelineae</taxon>
        <taxon>Arabidopsis</taxon>
    </lineage>
</organism>
<evidence type="ECO:0000250" key="1">
    <source>
        <dbReference type="UniProtKB" id="B3H7I1"/>
    </source>
</evidence>
<evidence type="ECO:0000255" key="2"/>
<evidence type="ECO:0000256" key="3">
    <source>
        <dbReference type="SAM" id="MobiDB-lite"/>
    </source>
</evidence>
<evidence type="ECO:0000269" key="4">
    <source>
    </source>
</evidence>
<evidence type="ECO:0000303" key="5">
    <source>
    </source>
</evidence>
<evidence type="ECO:0000303" key="6">
    <source>
    </source>
</evidence>
<evidence type="ECO:0000305" key="7"/>
<evidence type="ECO:0000312" key="8">
    <source>
        <dbReference type="Araport" id="AT1G65486"/>
    </source>
</evidence>
<evidence type="ECO:0000312" key="9">
    <source>
        <dbReference type="EMBL" id="AC001229"/>
    </source>
</evidence>